<protein>
    <recommendedName>
        <fullName>F-box/WD repeat-containing protein 5</fullName>
    </recommendedName>
    <alternativeName>
        <fullName>F-box and WD-40 domain-containing protein 5</fullName>
    </alternativeName>
</protein>
<keyword id="KW-0025">Alternative splicing</keyword>
<keyword id="KW-0963">Cytoplasm</keyword>
<keyword id="KW-0597">Phosphoprotein</keyword>
<keyword id="KW-1185">Reference proteome</keyword>
<keyword id="KW-0677">Repeat</keyword>
<keyword id="KW-0832">Ubl conjugation</keyword>
<keyword id="KW-0833">Ubl conjugation pathway</keyword>
<keyword id="KW-0853">WD repeat</keyword>
<feature type="chain" id="PRO_0000292805" description="F-box/WD repeat-containing protein 5">
    <location>
        <begin position="1"/>
        <end position="569"/>
    </location>
</feature>
<feature type="domain" description="F-box" evidence="4">
    <location>
        <begin position="3"/>
        <end position="49"/>
    </location>
</feature>
<feature type="repeat" description="WD 1">
    <location>
        <begin position="90"/>
        <end position="129"/>
    </location>
</feature>
<feature type="repeat" description="WD 2">
    <location>
        <begin position="470"/>
        <end position="509"/>
    </location>
</feature>
<feature type="repeat" description="WD 3">
    <location>
        <begin position="511"/>
        <end position="551"/>
    </location>
</feature>
<feature type="short sequence motif" description="D-box">
    <location>
        <begin position="308"/>
        <end position="316"/>
    </location>
</feature>
<feature type="modified residue" description="Phosphoserine; by PLK4" evidence="2">
    <location>
        <position position="151"/>
    </location>
</feature>
<feature type="splice variant" id="VSP_042295" description="In isoform 2." evidence="5">
    <original>M</original>
    <variation>MLSAMEFSAGQLVGLARTAMSGTPDHQSLPGVGGEEAWVESSHWWVSGPSGQNVTM</variation>
    <location>
        <position position="1"/>
    </location>
</feature>
<organism>
    <name type="scientific">Rattus norvegicus</name>
    <name type="common">Rat</name>
    <dbReference type="NCBI Taxonomy" id="10116"/>
    <lineage>
        <taxon>Eukaryota</taxon>
        <taxon>Metazoa</taxon>
        <taxon>Chordata</taxon>
        <taxon>Craniata</taxon>
        <taxon>Vertebrata</taxon>
        <taxon>Euteleostomi</taxon>
        <taxon>Mammalia</taxon>
        <taxon>Eutheria</taxon>
        <taxon>Euarchontoglires</taxon>
        <taxon>Glires</taxon>
        <taxon>Rodentia</taxon>
        <taxon>Myomorpha</taxon>
        <taxon>Muroidea</taxon>
        <taxon>Muridae</taxon>
        <taxon>Murinae</taxon>
        <taxon>Rattus</taxon>
    </lineage>
</organism>
<reference key="1">
    <citation type="journal article" date="2004" name="Nature">
        <title>Genome sequence of the Brown Norway rat yields insights into mammalian evolution.</title>
        <authorList>
            <person name="Gibbs R.A."/>
            <person name="Weinstock G.M."/>
            <person name="Metzker M.L."/>
            <person name="Muzny D.M."/>
            <person name="Sodergren E.J."/>
            <person name="Scherer S."/>
            <person name="Scott G."/>
            <person name="Steffen D."/>
            <person name="Worley K.C."/>
            <person name="Burch P.E."/>
            <person name="Okwuonu G."/>
            <person name="Hines S."/>
            <person name="Lewis L."/>
            <person name="Deramo C."/>
            <person name="Delgado O."/>
            <person name="Dugan-Rocha S."/>
            <person name="Miner G."/>
            <person name="Morgan M."/>
            <person name="Hawes A."/>
            <person name="Gill R."/>
            <person name="Holt R.A."/>
            <person name="Adams M.D."/>
            <person name="Amanatides P.G."/>
            <person name="Baden-Tillson H."/>
            <person name="Barnstead M."/>
            <person name="Chin S."/>
            <person name="Evans C.A."/>
            <person name="Ferriera S."/>
            <person name="Fosler C."/>
            <person name="Glodek A."/>
            <person name="Gu Z."/>
            <person name="Jennings D."/>
            <person name="Kraft C.L."/>
            <person name="Nguyen T."/>
            <person name="Pfannkoch C.M."/>
            <person name="Sitter C."/>
            <person name="Sutton G.G."/>
            <person name="Venter J.C."/>
            <person name="Woodage T."/>
            <person name="Smith D."/>
            <person name="Lee H.-M."/>
            <person name="Gustafson E."/>
            <person name="Cahill P."/>
            <person name="Kana A."/>
            <person name="Doucette-Stamm L."/>
            <person name="Weinstock K."/>
            <person name="Fechtel K."/>
            <person name="Weiss R.B."/>
            <person name="Dunn D.M."/>
            <person name="Green E.D."/>
            <person name="Blakesley R.W."/>
            <person name="Bouffard G.G."/>
            <person name="De Jong P.J."/>
            <person name="Osoegawa K."/>
            <person name="Zhu B."/>
            <person name="Marra M."/>
            <person name="Schein J."/>
            <person name="Bosdet I."/>
            <person name="Fjell C."/>
            <person name="Jones S."/>
            <person name="Krzywinski M."/>
            <person name="Mathewson C."/>
            <person name="Siddiqui A."/>
            <person name="Wye N."/>
            <person name="McPherson J."/>
            <person name="Zhao S."/>
            <person name="Fraser C.M."/>
            <person name="Shetty J."/>
            <person name="Shatsman S."/>
            <person name="Geer K."/>
            <person name="Chen Y."/>
            <person name="Abramzon S."/>
            <person name="Nierman W.C."/>
            <person name="Havlak P.H."/>
            <person name="Chen R."/>
            <person name="Durbin K.J."/>
            <person name="Egan A."/>
            <person name="Ren Y."/>
            <person name="Song X.-Z."/>
            <person name="Li B."/>
            <person name="Liu Y."/>
            <person name="Qin X."/>
            <person name="Cawley S."/>
            <person name="Cooney A.J."/>
            <person name="D'Souza L.M."/>
            <person name="Martin K."/>
            <person name="Wu J.Q."/>
            <person name="Gonzalez-Garay M.L."/>
            <person name="Jackson A.R."/>
            <person name="Kalafus K.J."/>
            <person name="McLeod M.P."/>
            <person name="Milosavljevic A."/>
            <person name="Virk D."/>
            <person name="Volkov A."/>
            <person name="Wheeler D.A."/>
            <person name="Zhang Z."/>
            <person name="Bailey J.A."/>
            <person name="Eichler E.E."/>
            <person name="Tuzun E."/>
            <person name="Birney E."/>
            <person name="Mongin E."/>
            <person name="Ureta-Vidal A."/>
            <person name="Woodwark C."/>
            <person name="Zdobnov E."/>
            <person name="Bork P."/>
            <person name="Suyama M."/>
            <person name="Torrents D."/>
            <person name="Alexandersson M."/>
            <person name="Trask B.J."/>
            <person name="Young J.M."/>
            <person name="Huang H."/>
            <person name="Wang H."/>
            <person name="Xing H."/>
            <person name="Daniels S."/>
            <person name="Gietzen D."/>
            <person name="Schmidt J."/>
            <person name="Stevens K."/>
            <person name="Vitt U."/>
            <person name="Wingrove J."/>
            <person name="Camara F."/>
            <person name="Mar Alba M."/>
            <person name="Abril J.F."/>
            <person name="Guigo R."/>
            <person name="Smit A."/>
            <person name="Dubchak I."/>
            <person name="Rubin E.M."/>
            <person name="Couronne O."/>
            <person name="Poliakov A."/>
            <person name="Huebner N."/>
            <person name="Ganten D."/>
            <person name="Goesele C."/>
            <person name="Hummel O."/>
            <person name="Kreitler T."/>
            <person name="Lee Y.-A."/>
            <person name="Monti J."/>
            <person name="Schulz H."/>
            <person name="Zimdahl H."/>
            <person name="Himmelbauer H."/>
            <person name="Lehrach H."/>
            <person name="Jacob H.J."/>
            <person name="Bromberg S."/>
            <person name="Gullings-Handley J."/>
            <person name="Jensen-Seaman M.I."/>
            <person name="Kwitek A.E."/>
            <person name="Lazar J."/>
            <person name="Pasko D."/>
            <person name="Tonellato P.J."/>
            <person name="Twigger S."/>
            <person name="Ponting C.P."/>
            <person name="Duarte J.M."/>
            <person name="Rice S."/>
            <person name="Goodstadt L."/>
            <person name="Beatson S.A."/>
            <person name="Emes R.D."/>
            <person name="Winter E.E."/>
            <person name="Webber C."/>
            <person name="Brandt P."/>
            <person name="Nyakatura G."/>
            <person name="Adetobi M."/>
            <person name="Chiaromonte F."/>
            <person name="Elnitski L."/>
            <person name="Eswara P."/>
            <person name="Hardison R.C."/>
            <person name="Hou M."/>
            <person name="Kolbe D."/>
            <person name="Makova K."/>
            <person name="Miller W."/>
            <person name="Nekrutenko A."/>
            <person name="Riemer C."/>
            <person name="Schwartz S."/>
            <person name="Taylor J."/>
            <person name="Yang S."/>
            <person name="Zhang Y."/>
            <person name="Lindpaintner K."/>
            <person name="Andrews T.D."/>
            <person name="Caccamo M."/>
            <person name="Clamp M."/>
            <person name="Clarke L."/>
            <person name="Curwen V."/>
            <person name="Durbin R.M."/>
            <person name="Eyras E."/>
            <person name="Searle S.M."/>
            <person name="Cooper G.M."/>
            <person name="Batzoglou S."/>
            <person name="Brudno M."/>
            <person name="Sidow A."/>
            <person name="Stone E.A."/>
            <person name="Payseur B.A."/>
            <person name="Bourque G."/>
            <person name="Lopez-Otin C."/>
            <person name="Puente X.S."/>
            <person name="Chakrabarti K."/>
            <person name="Chatterji S."/>
            <person name="Dewey C."/>
            <person name="Pachter L."/>
            <person name="Bray N."/>
            <person name="Yap V.B."/>
            <person name="Caspi A."/>
            <person name="Tesler G."/>
            <person name="Pevzner P.A."/>
            <person name="Haussler D."/>
            <person name="Roskin K.M."/>
            <person name="Baertsch R."/>
            <person name="Clawson H."/>
            <person name="Furey T.S."/>
            <person name="Hinrichs A.S."/>
            <person name="Karolchik D."/>
            <person name="Kent W.J."/>
            <person name="Rosenbloom K.R."/>
            <person name="Trumbower H."/>
            <person name="Weirauch M."/>
            <person name="Cooper D.N."/>
            <person name="Stenson P.D."/>
            <person name="Ma B."/>
            <person name="Brent M."/>
            <person name="Arumugam M."/>
            <person name="Shteynberg D."/>
            <person name="Copley R.R."/>
            <person name="Taylor M.S."/>
            <person name="Riethman H."/>
            <person name="Mudunuri U."/>
            <person name="Peterson J."/>
            <person name="Guyer M."/>
            <person name="Felsenfeld A."/>
            <person name="Old S."/>
            <person name="Mockrin S."/>
            <person name="Collins F.S."/>
        </authorList>
    </citation>
    <scope>NUCLEOTIDE SEQUENCE [LARGE SCALE GENOMIC DNA]</scope>
    <source>
        <strain>Brown Norway</strain>
    </source>
</reference>
<reference key="2">
    <citation type="journal article" date="2004" name="Genome Res.">
        <title>The status, quality, and expansion of the NIH full-length cDNA project: the Mammalian Gene Collection (MGC).</title>
        <authorList>
            <consortium name="The MGC Project Team"/>
        </authorList>
    </citation>
    <scope>NUCLEOTIDE SEQUENCE [LARGE SCALE MRNA] (ISOFORM 2)</scope>
    <source>
        <tissue>Thymus</tissue>
    </source>
</reference>
<name>FBXW5_RAT</name>
<dbReference type="EMBL" id="BC099179">
    <property type="protein sequence ID" value="AAH99179.1"/>
    <property type="molecule type" value="mRNA"/>
</dbReference>
<dbReference type="RefSeq" id="NP_001020901.1">
    <molecule id="Q4KLI9-1"/>
    <property type="nucleotide sequence ID" value="NM_001025730.2"/>
</dbReference>
<dbReference type="RefSeq" id="XP_006233685.1">
    <property type="nucleotide sequence ID" value="XM_006233623.2"/>
</dbReference>
<dbReference type="RefSeq" id="XP_006233686.1">
    <molecule id="Q4KLI9-1"/>
    <property type="nucleotide sequence ID" value="XM_006233624.5"/>
</dbReference>
<dbReference type="RefSeq" id="XP_006233687.1">
    <molecule id="Q4KLI9-1"/>
    <property type="nucleotide sequence ID" value="XM_006233625.4"/>
</dbReference>
<dbReference type="RefSeq" id="XP_006233688.1">
    <molecule id="Q4KLI9-1"/>
    <property type="nucleotide sequence ID" value="XM_006233626.5"/>
</dbReference>
<dbReference type="RefSeq" id="XP_006233689.1">
    <molecule id="Q4KLI9-1"/>
    <property type="nucleotide sequence ID" value="XM_006233627.4"/>
</dbReference>
<dbReference type="SMR" id="Q4KLI9"/>
<dbReference type="FunCoup" id="Q4KLI9">
    <property type="interactions" value="1135"/>
</dbReference>
<dbReference type="STRING" id="10116.ENSRNOP00000029229"/>
<dbReference type="PhosphoSitePlus" id="Q4KLI9"/>
<dbReference type="PaxDb" id="10116-ENSRNOP00000049492"/>
<dbReference type="Ensembl" id="ENSRNOT00000034089.6">
    <molecule id="Q4KLI9-1"/>
    <property type="protein sequence ID" value="ENSRNOP00000029229.3"/>
    <property type="gene ID" value="ENSRNOG00000028674.7"/>
</dbReference>
<dbReference type="Ensembl" id="ENSRNOT00000113742.1">
    <molecule id="Q4KLI9-2"/>
    <property type="protein sequence ID" value="ENSRNOP00000078193.1"/>
    <property type="gene ID" value="ENSRNOG00000028674.7"/>
</dbReference>
<dbReference type="GeneID" id="362081"/>
<dbReference type="KEGG" id="rno:362081"/>
<dbReference type="UCSC" id="RGD:1305661">
    <molecule id="Q4KLI9-1"/>
    <property type="organism name" value="rat"/>
</dbReference>
<dbReference type="AGR" id="RGD:1305661"/>
<dbReference type="CTD" id="54461"/>
<dbReference type="RGD" id="1305661">
    <property type="gene designation" value="Fbxw5"/>
</dbReference>
<dbReference type="eggNOG" id="ENOG502QTGQ">
    <property type="taxonomic scope" value="Eukaryota"/>
</dbReference>
<dbReference type="GeneTree" id="ENSGT00730000111276"/>
<dbReference type="HOGENOM" id="CLU_021121_0_0_1"/>
<dbReference type="InParanoid" id="Q4KLI9"/>
<dbReference type="OMA" id="NPRDSEM"/>
<dbReference type="OrthoDB" id="21665at9989"/>
<dbReference type="Reactome" id="R-RNO-8951664">
    <property type="pathway name" value="Neddylation"/>
</dbReference>
<dbReference type="Reactome" id="R-RNO-983168">
    <property type="pathway name" value="Antigen processing: Ubiquitination &amp; Proteasome degradation"/>
</dbReference>
<dbReference type="UniPathway" id="UPA00143"/>
<dbReference type="PRO" id="PR:Q4KLI9"/>
<dbReference type="Proteomes" id="UP000002494">
    <property type="component" value="Chromosome 3"/>
</dbReference>
<dbReference type="Bgee" id="ENSRNOG00000028674">
    <property type="expression patterns" value="Expressed in testis and 19 other cell types or tissues"/>
</dbReference>
<dbReference type="GO" id="GO:0080008">
    <property type="term" value="C:Cul4-RING E3 ubiquitin ligase complex"/>
    <property type="evidence" value="ECO:0000250"/>
    <property type="project" value="UniProtKB"/>
</dbReference>
<dbReference type="GO" id="GO:0005737">
    <property type="term" value="C:cytoplasm"/>
    <property type="evidence" value="ECO:0000250"/>
    <property type="project" value="UniProtKB"/>
</dbReference>
<dbReference type="GO" id="GO:0019005">
    <property type="term" value="C:SCF ubiquitin ligase complex"/>
    <property type="evidence" value="ECO:0000250"/>
    <property type="project" value="UniProtKB"/>
</dbReference>
<dbReference type="GO" id="GO:0019901">
    <property type="term" value="F:protein kinase binding"/>
    <property type="evidence" value="ECO:0000266"/>
    <property type="project" value="RGD"/>
</dbReference>
<dbReference type="GO" id="GO:0043161">
    <property type="term" value="P:proteasome-mediated ubiquitin-dependent protein catabolic process"/>
    <property type="evidence" value="ECO:0000250"/>
    <property type="project" value="UniProtKB"/>
</dbReference>
<dbReference type="GO" id="GO:0016567">
    <property type="term" value="P:protein ubiquitination"/>
    <property type="evidence" value="ECO:0000250"/>
    <property type="project" value="UniProtKB"/>
</dbReference>
<dbReference type="GO" id="GO:0010824">
    <property type="term" value="P:regulation of centrosome duplication"/>
    <property type="evidence" value="ECO:0000250"/>
    <property type="project" value="UniProtKB"/>
</dbReference>
<dbReference type="GO" id="GO:0007088">
    <property type="term" value="P:regulation of mitotic nuclear division"/>
    <property type="evidence" value="ECO:0000266"/>
    <property type="project" value="RGD"/>
</dbReference>
<dbReference type="GO" id="GO:0031146">
    <property type="term" value="P:SCF-dependent proteasomal ubiquitin-dependent protein catabolic process"/>
    <property type="evidence" value="ECO:0000250"/>
    <property type="project" value="UniProtKB"/>
</dbReference>
<dbReference type="CDD" id="cd22132">
    <property type="entry name" value="F-box_FBXW5"/>
    <property type="match status" value="1"/>
</dbReference>
<dbReference type="FunFam" id="1.20.1280.50:FF:000032">
    <property type="entry name" value="F-box/WD repeat-containing protein 5 isoform X1"/>
    <property type="match status" value="1"/>
</dbReference>
<dbReference type="FunFam" id="2.130.10.10:FF:000305">
    <property type="entry name" value="F-box/WD repeat-containing protein 5 isoform X1"/>
    <property type="match status" value="1"/>
</dbReference>
<dbReference type="FunFam" id="2.130.10.10:FF:000335">
    <property type="entry name" value="F-box/WD repeat-containing protein 5 isoform X1"/>
    <property type="match status" value="1"/>
</dbReference>
<dbReference type="Gene3D" id="1.20.1280.50">
    <property type="match status" value="1"/>
</dbReference>
<dbReference type="Gene3D" id="2.130.10.10">
    <property type="entry name" value="YVTN repeat-like/Quinoprotein amine dehydrogenase"/>
    <property type="match status" value="2"/>
</dbReference>
<dbReference type="InterPro" id="IPR036047">
    <property type="entry name" value="F-box-like_dom_sf"/>
</dbReference>
<dbReference type="InterPro" id="IPR001810">
    <property type="entry name" value="F-box_dom"/>
</dbReference>
<dbReference type="InterPro" id="IPR042508">
    <property type="entry name" value="FBXW5"/>
</dbReference>
<dbReference type="InterPro" id="IPR015943">
    <property type="entry name" value="WD40/YVTN_repeat-like_dom_sf"/>
</dbReference>
<dbReference type="InterPro" id="IPR036322">
    <property type="entry name" value="WD40_repeat_dom_sf"/>
</dbReference>
<dbReference type="InterPro" id="IPR001680">
    <property type="entry name" value="WD40_rpt"/>
</dbReference>
<dbReference type="PANTHER" id="PTHR20995">
    <property type="entry name" value="F-BOX/WD REPEAT-CONTAINING PROTEIN 5"/>
    <property type="match status" value="1"/>
</dbReference>
<dbReference type="PANTHER" id="PTHR20995:SF17">
    <property type="entry name" value="F-BOX_WD REPEAT-CONTAINING PROTEIN 5"/>
    <property type="match status" value="1"/>
</dbReference>
<dbReference type="Pfam" id="PF12937">
    <property type="entry name" value="F-box-like"/>
    <property type="match status" value="1"/>
</dbReference>
<dbReference type="Pfam" id="PF00400">
    <property type="entry name" value="WD40"/>
    <property type="match status" value="2"/>
</dbReference>
<dbReference type="SMART" id="SM00256">
    <property type="entry name" value="FBOX"/>
    <property type="match status" value="1"/>
</dbReference>
<dbReference type="SMART" id="SM00320">
    <property type="entry name" value="WD40"/>
    <property type="match status" value="3"/>
</dbReference>
<dbReference type="SUPFAM" id="SSF81383">
    <property type="entry name" value="F-box domain"/>
    <property type="match status" value="1"/>
</dbReference>
<dbReference type="SUPFAM" id="SSF50978">
    <property type="entry name" value="WD40 repeat-like"/>
    <property type="match status" value="1"/>
</dbReference>
<dbReference type="PROSITE" id="PS50181">
    <property type="entry name" value="FBOX"/>
    <property type="match status" value="1"/>
</dbReference>
<dbReference type="PROSITE" id="PS50082">
    <property type="entry name" value="WD_REPEATS_2"/>
    <property type="match status" value="2"/>
</dbReference>
<dbReference type="PROSITE" id="PS50294">
    <property type="entry name" value="WD_REPEATS_REGION"/>
    <property type="match status" value="2"/>
</dbReference>
<accession>Q4KLI9</accession>
<accession>F8WFL5</accession>
<sequence>MDEGGMPLLPDSLVYQIFLSLGPADVLAAGLVCRQWQAVSRDEFLWREQFYRYYQVARDVPRHPAATSWYEEFRRLYDMVPCVEVQTLKEHTDQVLHLSFSHSGYQFASCSKDCTVKIWNNDLTISLLHSADMRPYNWSYTQFSQFNQDDSLLLASGVFLGPHNSSSGEIAVISLDSFALLSRVRNKPYDVFGCWLTETSLISGNLHRIGDVTSCSVLWLNNAFQDVESENVNVVKRLFKIQNLNASTIRTVMVADCSRFDSPDLLLDAGDQAGLPCRVFDLGGDTEEEATDPGLHTSGSGHVKEGLRRVFDSVLDGHGQLSDCALETKVAELLAQGHTKPPECPDADSRNKYLIFTTGCLTYSPHQIGIKQILPHQMTTAGPVLGEGRGSDAFFDALDHVIDVHGHIIGMGLSPDNRYLYVNSRAWPPGSVVADPMQPPPIAEEIDLLVFDLKTMREVKRALRAHRAYTPNDECFFIFLDVSRDFVASGAEDRHGYIWDRHYNICLAKLRHEDVVNSVAFSPQEQELLLTASDDATIKAWRSPRIVRVLQAPHPRPRPFFSWFASHRR</sequence>
<comment type="function">
    <text evidence="1">Substrate recognition component of both SCF (SKP1-CUL1-F-box protein) and DCX (DDB1-CUL4-X-box) E3 ubiquitin-protein ligase complexes. Substrate recognition component of the SCF(FBXW5) E3 ubiquitin-protein ligase complex which mediates the ubiquitination and subsequent proteasomal degradation of SASS6 during S phase, leading to prevent centriole reduplication. The SCF(FBXW5) complex also mediates ubiquitination and degradation of actin-regulator EPS8 during G2 phase, leading to the transient degradation of EPS8 and subsequent cell shape changes required to allow mitotic progression. Substrate-specific adapter of the DCX(FBXW5) E3 ubiquitin-protein ligase complex which mediates the polyubiquitination and subsequent degradation of TSC2. May also act as a negative regulator of MAP3K7/TAK1 signaling in the interleukin-1B (IL1B) signaling pathway (By similarity).</text>
</comment>
<comment type="pathway">
    <text>Protein modification; protein ubiquitination.</text>
</comment>
<comment type="subunit">
    <text evidence="1 3">Part of the SCF (SKP1-CUL1-F-box) E3 ubiquitin-protein ligase complex SCF(FBXW5) composed of CUL1, SKP1, RBX1 and FBXW5. Component of the DCX(FBXW5) E3 ubiquitin ligase complex, at least composed of (CUL4A or CUL4B), DDB1, FBXW5 and RBX1. Interacts with CDC20, EPS8, TSC1, TSC2 and SASS6. Interacts with TNFAIP8L1; TNFAIP8L1 competes with TSC2 to bind FBXW5 increasing TSC2 stability by preventing its ubiquitination.</text>
</comment>
<comment type="subcellular location">
    <subcellularLocation>
        <location evidence="2">Cytoplasm</location>
    </subcellularLocation>
</comment>
<comment type="alternative products">
    <event type="alternative splicing"/>
    <isoform>
        <id>Q4KLI9-1</id>
        <name>1</name>
        <sequence type="displayed"/>
    </isoform>
    <isoform>
        <id>Q4KLI9-2</id>
        <name>2</name>
        <sequence type="described" ref="VSP_042295"/>
    </isoform>
</comment>
<comment type="domain">
    <text evidence="1">The F-box domain mediates interaction with components of SCF (SKP1-CUL1-F-box protein) complexes, while WD repeats mediate interaction with components of DCX (DDB1-CUL4-X-box) complexes.</text>
</comment>
<comment type="domain">
    <text evidence="1">The D-box (destruction box) mediate the interaction with APC proteins, and acts as a recognition signal for degradation via the ubiquitin-proteasome pathway.</text>
</comment>
<comment type="PTM">
    <text evidence="1">Phosphorylated at Ser-151 by PLK4 during the G1/S transition, leading to inhibit its ability to ubiquitinate SASS6.</text>
</comment>
<comment type="PTM">
    <text evidence="1">Ubiquitinated and degraded by the APC/C complex during mitosis and G1 phase.</text>
</comment>
<comment type="similarity">
    <text evidence="6">Belongs to the FBXW5 family.</text>
</comment>
<gene>
    <name type="primary">Fbxw5</name>
</gene>
<proteinExistence type="evidence at transcript level"/>
<evidence type="ECO:0000250" key="1"/>
<evidence type="ECO:0000250" key="2">
    <source>
        <dbReference type="UniProtKB" id="Q969U6"/>
    </source>
</evidence>
<evidence type="ECO:0000250" key="3">
    <source>
        <dbReference type="UniProtKB" id="Q9QXW2"/>
    </source>
</evidence>
<evidence type="ECO:0000255" key="4">
    <source>
        <dbReference type="PROSITE-ProRule" id="PRU00080"/>
    </source>
</evidence>
<evidence type="ECO:0000303" key="5">
    <source>
    </source>
</evidence>
<evidence type="ECO:0000305" key="6"/>